<dbReference type="EC" id="5.2.1.8"/>
<dbReference type="EMBL" id="AACD01000063">
    <property type="protein sequence ID" value="EAA58836.1"/>
    <property type="molecule type" value="Genomic_DNA"/>
</dbReference>
<dbReference type="EMBL" id="BN001302">
    <property type="protein sequence ID" value="CBF75125.1"/>
    <property type="molecule type" value="Genomic_DNA"/>
</dbReference>
<dbReference type="RefSeq" id="XP_661509.1">
    <property type="nucleotide sequence ID" value="XM_656417.1"/>
</dbReference>
<dbReference type="SMR" id="Q5B6C5"/>
<dbReference type="FunCoup" id="Q5B6C5">
    <property type="interactions" value="92"/>
</dbReference>
<dbReference type="STRING" id="227321.Q5B6C5"/>
<dbReference type="EnsemblFungi" id="CBF75125">
    <property type="protein sequence ID" value="CBF75125"/>
    <property type="gene ID" value="ANIA_03905"/>
</dbReference>
<dbReference type="KEGG" id="ani:ANIA_03905"/>
<dbReference type="eggNOG" id="KOG2867">
    <property type="taxonomic scope" value="Eukaryota"/>
</dbReference>
<dbReference type="HOGENOM" id="CLU_030733_2_0_1"/>
<dbReference type="InParanoid" id="Q5B6C5"/>
<dbReference type="OMA" id="IHESQDV"/>
<dbReference type="OrthoDB" id="16120at2759"/>
<dbReference type="Proteomes" id="UP000000560">
    <property type="component" value="Chromosome II"/>
</dbReference>
<dbReference type="GO" id="GO:0000785">
    <property type="term" value="C:chromatin"/>
    <property type="evidence" value="ECO:0007669"/>
    <property type="project" value="EnsemblFungi"/>
</dbReference>
<dbReference type="GO" id="GO:0005737">
    <property type="term" value="C:cytoplasm"/>
    <property type="evidence" value="ECO:0000318"/>
    <property type="project" value="GO_Central"/>
</dbReference>
<dbReference type="GO" id="GO:0005634">
    <property type="term" value="C:nucleus"/>
    <property type="evidence" value="ECO:0000318"/>
    <property type="project" value="GO_Central"/>
</dbReference>
<dbReference type="GO" id="GO:0000159">
    <property type="term" value="C:protein phosphatase type 2A complex"/>
    <property type="evidence" value="ECO:0000318"/>
    <property type="project" value="GO_Central"/>
</dbReference>
<dbReference type="GO" id="GO:0003755">
    <property type="term" value="F:peptidyl-prolyl cis-trans isomerase activity"/>
    <property type="evidence" value="ECO:0000318"/>
    <property type="project" value="GO_Central"/>
</dbReference>
<dbReference type="GO" id="GO:0008160">
    <property type="term" value="F:protein tyrosine phosphatase activator activity"/>
    <property type="evidence" value="ECO:0000318"/>
    <property type="project" value="GO_Central"/>
</dbReference>
<dbReference type="GO" id="GO:0006914">
    <property type="term" value="P:autophagy"/>
    <property type="evidence" value="ECO:0007669"/>
    <property type="project" value="EnsemblFungi"/>
</dbReference>
<dbReference type="GO" id="GO:0006281">
    <property type="term" value="P:DNA repair"/>
    <property type="evidence" value="ECO:0007669"/>
    <property type="project" value="EnsemblFungi"/>
</dbReference>
<dbReference type="GO" id="GO:0000082">
    <property type="term" value="P:G1/S transition of mitotic cell cycle"/>
    <property type="evidence" value="ECO:0007669"/>
    <property type="project" value="EnsemblFungi"/>
</dbReference>
<dbReference type="GO" id="GO:0007052">
    <property type="term" value="P:mitotic spindle organization"/>
    <property type="evidence" value="ECO:0000318"/>
    <property type="project" value="GO_Central"/>
</dbReference>
<dbReference type="GO" id="GO:0006357">
    <property type="term" value="P:regulation of transcription by RNA polymerase II"/>
    <property type="evidence" value="ECO:0007669"/>
    <property type="project" value="EnsemblFungi"/>
</dbReference>
<dbReference type="CDD" id="cd04087">
    <property type="entry name" value="PTPA"/>
    <property type="match status" value="1"/>
</dbReference>
<dbReference type="FunFam" id="1.20.120.1150:FF:000003">
    <property type="entry name" value="Serine/threonine-protein phosphatase 2A activator"/>
    <property type="match status" value="1"/>
</dbReference>
<dbReference type="Gene3D" id="1.20.120.1150">
    <property type="match status" value="1"/>
</dbReference>
<dbReference type="InterPro" id="IPR004327">
    <property type="entry name" value="Phstyr_phstse_ac"/>
</dbReference>
<dbReference type="InterPro" id="IPR043170">
    <property type="entry name" value="PTPA_C_lid"/>
</dbReference>
<dbReference type="InterPro" id="IPR037218">
    <property type="entry name" value="PTPA_sf"/>
</dbReference>
<dbReference type="PANTHER" id="PTHR10012">
    <property type="entry name" value="SERINE/THREONINE-PROTEIN PHOSPHATASE 2A REGULATORY SUBUNIT B"/>
    <property type="match status" value="1"/>
</dbReference>
<dbReference type="PANTHER" id="PTHR10012:SF3">
    <property type="entry name" value="SERINE_THREONINE-PROTEIN PHOSPHATASE 2A ACTIVATOR 1"/>
    <property type="match status" value="1"/>
</dbReference>
<dbReference type="Pfam" id="PF03095">
    <property type="entry name" value="PTPA"/>
    <property type="match status" value="1"/>
</dbReference>
<dbReference type="PIRSF" id="PIRSF016325">
    <property type="entry name" value="Phstyr_phstse_ac"/>
    <property type="match status" value="1"/>
</dbReference>
<dbReference type="SUPFAM" id="SSF140984">
    <property type="entry name" value="PTPA-like"/>
    <property type="match status" value="1"/>
</dbReference>
<reference key="1">
    <citation type="journal article" date="2005" name="Nature">
        <title>Sequencing of Aspergillus nidulans and comparative analysis with A. fumigatus and A. oryzae.</title>
        <authorList>
            <person name="Galagan J.E."/>
            <person name="Calvo S.E."/>
            <person name="Cuomo C."/>
            <person name="Ma L.-J."/>
            <person name="Wortman J.R."/>
            <person name="Batzoglou S."/>
            <person name="Lee S.-I."/>
            <person name="Bastuerkmen M."/>
            <person name="Spevak C.C."/>
            <person name="Clutterbuck J."/>
            <person name="Kapitonov V."/>
            <person name="Jurka J."/>
            <person name="Scazzocchio C."/>
            <person name="Farman M.L."/>
            <person name="Butler J."/>
            <person name="Purcell S."/>
            <person name="Harris S."/>
            <person name="Braus G.H."/>
            <person name="Draht O."/>
            <person name="Busch S."/>
            <person name="D'Enfert C."/>
            <person name="Bouchier C."/>
            <person name="Goldman G.H."/>
            <person name="Bell-Pedersen D."/>
            <person name="Griffiths-Jones S."/>
            <person name="Doonan J.H."/>
            <person name="Yu J."/>
            <person name="Vienken K."/>
            <person name="Pain A."/>
            <person name="Freitag M."/>
            <person name="Selker E.U."/>
            <person name="Archer D.B."/>
            <person name="Penalva M.A."/>
            <person name="Oakley B.R."/>
            <person name="Momany M."/>
            <person name="Tanaka T."/>
            <person name="Kumagai T."/>
            <person name="Asai K."/>
            <person name="Machida M."/>
            <person name="Nierman W.C."/>
            <person name="Denning D.W."/>
            <person name="Caddick M.X."/>
            <person name="Hynes M."/>
            <person name="Paoletti M."/>
            <person name="Fischer R."/>
            <person name="Miller B.L."/>
            <person name="Dyer P.S."/>
            <person name="Sachs M.S."/>
            <person name="Osmani S.A."/>
            <person name="Birren B.W."/>
        </authorList>
    </citation>
    <scope>NUCLEOTIDE SEQUENCE [LARGE SCALE GENOMIC DNA]</scope>
    <source>
        <strain>FGSC A4 / ATCC 38163 / CBS 112.46 / NRRL 194 / M139</strain>
    </source>
</reference>
<reference key="2">
    <citation type="journal article" date="2009" name="Fungal Genet. Biol.">
        <title>The 2008 update of the Aspergillus nidulans genome annotation: a community effort.</title>
        <authorList>
            <person name="Wortman J.R."/>
            <person name="Gilsenan J.M."/>
            <person name="Joardar V."/>
            <person name="Deegan J."/>
            <person name="Clutterbuck J."/>
            <person name="Andersen M.R."/>
            <person name="Archer D."/>
            <person name="Bencina M."/>
            <person name="Braus G."/>
            <person name="Coutinho P."/>
            <person name="von Dohren H."/>
            <person name="Doonan J."/>
            <person name="Driessen A.J."/>
            <person name="Durek P."/>
            <person name="Espeso E."/>
            <person name="Fekete E."/>
            <person name="Flipphi M."/>
            <person name="Estrada C.G."/>
            <person name="Geysens S."/>
            <person name="Goldman G."/>
            <person name="de Groot P.W."/>
            <person name="Hansen K."/>
            <person name="Harris S.D."/>
            <person name="Heinekamp T."/>
            <person name="Helmstaedt K."/>
            <person name="Henrissat B."/>
            <person name="Hofmann G."/>
            <person name="Homan T."/>
            <person name="Horio T."/>
            <person name="Horiuchi H."/>
            <person name="James S."/>
            <person name="Jones M."/>
            <person name="Karaffa L."/>
            <person name="Karanyi Z."/>
            <person name="Kato M."/>
            <person name="Keller N."/>
            <person name="Kelly D.E."/>
            <person name="Kiel J.A."/>
            <person name="Kim J.M."/>
            <person name="van der Klei I.J."/>
            <person name="Klis F.M."/>
            <person name="Kovalchuk A."/>
            <person name="Krasevec N."/>
            <person name="Kubicek C.P."/>
            <person name="Liu B."/>
            <person name="Maccabe A."/>
            <person name="Meyer V."/>
            <person name="Mirabito P."/>
            <person name="Miskei M."/>
            <person name="Mos M."/>
            <person name="Mullins J."/>
            <person name="Nelson D.R."/>
            <person name="Nielsen J."/>
            <person name="Oakley B.R."/>
            <person name="Osmani S.A."/>
            <person name="Pakula T."/>
            <person name="Paszewski A."/>
            <person name="Paulsen I."/>
            <person name="Pilsyk S."/>
            <person name="Pocsi I."/>
            <person name="Punt P.J."/>
            <person name="Ram A.F."/>
            <person name="Ren Q."/>
            <person name="Robellet X."/>
            <person name="Robson G."/>
            <person name="Seiboth B."/>
            <person name="van Solingen P."/>
            <person name="Specht T."/>
            <person name="Sun J."/>
            <person name="Taheri-Talesh N."/>
            <person name="Takeshita N."/>
            <person name="Ussery D."/>
            <person name="vanKuyk P.A."/>
            <person name="Visser H."/>
            <person name="van de Vondervoort P.J."/>
            <person name="de Vries R.P."/>
            <person name="Walton J."/>
            <person name="Xiang X."/>
            <person name="Xiong Y."/>
            <person name="Zeng A.P."/>
            <person name="Brandt B.W."/>
            <person name="Cornell M.J."/>
            <person name="van den Hondel C.A."/>
            <person name="Visser J."/>
            <person name="Oliver S.G."/>
            <person name="Turner G."/>
        </authorList>
    </citation>
    <scope>GENOME REANNOTATION</scope>
    <source>
        <strain>FGSC A4 / ATCC 38163 / CBS 112.46 / NRRL 194 / M139</strain>
    </source>
</reference>
<comment type="function">
    <text evidence="1">PPIases accelerate the folding of proteins. It catalyzes the cis-trans isomerization of proline imidic peptide bonds in oligopeptides. Acts as a regulatory subunit for PP2A-like phosphatases modulating their activity or substrate specificity, probably by inducing a conformational change in the catalytic subunit, a direct target of the PPIase. Can reactivate inactive phosphatase PP2A-phosphatase methylesterase complexes (PP2Ai) in presence of ATP and Mg(2+) by dissociating the inactive form from the complex (By similarity).</text>
</comment>
<comment type="catalytic activity">
    <reaction>
        <text>[protein]-peptidylproline (omega=180) = [protein]-peptidylproline (omega=0)</text>
        <dbReference type="Rhea" id="RHEA:16237"/>
        <dbReference type="Rhea" id="RHEA-COMP:10747"/>
        <dbReference type="Rhea" id="RHEA-COMP:10748"/>
        <dbReference type="ChEBI" id="CHEBI:83833"/>
        <dbReference type="ChEBI" id="CHEBI:83834"/>
        <dbReference type="EC" id="5.2.1.8"/>
    </reaction>
</comment>
<comment type="subcellular location">
    <subcellularLocation>
        <location evidence="1">Cytoplasm</location>
    </subcellularLocation>
    <subcellularLocation>
        <location evidence="1">Nucleus</location>
    </subcellularLocation>
</comment>
<comment type="similarity">
    <text evidence="2">Belongs to the PTPA-type PPIase family.</text>
</comment>
<feature type="chain" id="PRO_0000226099" description="Serine/threonine-protein phosphatase 2A activator 1">
    <location>
        <begin position="1"/>
        <end position="432"/>
    </location>
</feature>
<evidence type="ECO:0000250" key="1"/>
<evidence type="ECO:0000305" key="2"/>
<keyword id="KW-0963">Cytoplasm</keyword>
<keyword id="KW-0413">Isomerase</keyword>
<keyword id="KW-0539">Nucleus</keyword>
<keyword id="KW-1185">Reference proteome</keyword>
<keyword id="KW-0697">Rotamase</keyword>
<protein>
    <recommendedName>
        <fullName>Serine/threonine-protein phosphatase 2A activator 1</fullName>
        <ecNumber>5.2.1.8</ecNumber>
    </recommendedName>
    <alternativeName>
        <fullName>Peptidyl-prolyl cis-trans isomerase PTPA-1</fullName>
        <shortName>PPIase PTPA-1</shortName>
        <shortName>Rotamase PTPA-1</shortName>
    </alternativeName>
    <alternativeName>
        <fullName>Phosphotyrosyl phosphatase activator 1</fullName>
    </alternativeName>
</protein>
<accession>Q5B6C5</accession>
<accession>C8V6A0</accession>
<proteinExistence type="inferred from homology"/>
<gene>
    <name type="primary">rrd1</name>
    <name type="ORF">AN3905</name>
</gene>
<organism>
    <name type="scientific">Emericella nidulans (strain FGSC A4 / ATCC 38163 / CBS 112.46 / NRRL 194 / M139)</name>
    <name type="common">Aspergillus nidulans</name>
    <dbReference type="NCBI Taxonomy" id="227321"/>
    <lineage>
        <taxon>Eukaryota</taxon>
        <taxon>Fungi</taxon>
        <taxon>Dikarya</taxon>
        <taxon>Ascomycota</taxon>
        <taxon>Pezizomycotina</taxon>
        <taxon>Eurotiomycetes</taxon>
        <taxon>Eurotiomycetidae</taxon>
        <taxon>Eurotiales</taxon>
        <taxon>Aspergillaceae</taxon>
        <taxon>Aspergillus</taxon>
        <taxon>Aspergillus subgen. Nidulantes</taxon>
    </lineage>
</organism>
<name>PTPA1_EMENI</name>
<sequence length="432" mass="48232">MDTSQVRILPKLDISAGHNFTKPSKRINESQDVAEFLSSKAYVDLMTFLLQLNRSLFPTKLPDGRVLTWELNSEAVEYSAPVRQLQQLLSKLEAILDEAPPDTGPRRFGNISFRRWYEMVESRAASLLEECLSKEILQMPSSDPGAPTAEVELLAYFLGSWGSPQRLDYGTGHELSFLAFLAGIWKLHGFPENSPGVEERAIVLGVIQPYLELVRTIIKRYTLEPAGSHGVWGLDDHSFIPYIFGSAQLAPAISESDRIPEEGSLSDAPAPGGVTKANVVERERKHNLYFSAIGFIYDVKRGPFWEHSPMLYDISGIQAGWAKINKGMIKMYNAEVLSKFPVVQHFPFGSLFSWERDPNAPSPAADAHIAATTRRTDEASTSSYLYSPKYIKATSWSYGSYKGALGNISTRWTGSPWRFYVCRPYANESSVG</sequence>